<organism>
    <name type="scientific">Citrobacter koseri (strain ATCC BAA-895 / CDC 4225-83 / SGSC4696)</name>
    <dbReference type="NCBI Taxonomy" id="290338"/>
    <lineage>
        <taxon>Bacteria</taxon>
        <taxon>Pseudomonadati</taxon>
        <taxon>Pseudomonadota</taxon>
        <taxon>Gammaproteobacteria</taxon>
        <taxon>Enterobacterales</taxon>
        <taxon>Enterobacteriaceae</taxon>
        <taxon>Citrobacter</taxon>
    </lineage>
</organism>
<accession>A8AJG0</accession>
<sequence>MQEQYRPEEIESKVQQHWDEKRTFEVTEDESKEKYYCLSMLPYPSGRLHMGHVRNYTIGDVIARYQRMLGKNVLQPIGWDAFGLPAEGAAVKNNTAPAPWTYDNIAYMKNQLKMLGFGYDWSRELATCTPEYYRWEQKFFTELYKKGLVYKKTSAVNWCPNDQTVLANEQVIDGCCWRCDTKVERKEIPQWFIKITAYADELLNDLDKLDHWPDTVKTMQRNWIGRSEGVEITFDVNGYDNTLTVYTTRPDTFMGATYLAVAAGHPLAQKAAANNPELAAFIDECRNTKVAEADMATMEKKGVDTGFKAIHPLTGEAIPVWAANFVLMEYGTGAVMAVPGHDQRDYEFATKYGLTIKPVILAADGSEPDLSEQALTEKGVLFNSGEFNGLGFEDAFNAIADKLAAKGVGERKVNYRLRDWGVSRQRYWGAPIPMVTLEDGTVLPTPEDQLPVILPEDVVMDGITSPIKADPEWAKTTVNGQPALRETDTFDTFMESSWYYARYTCPQYNEGMLDPEAANYWLPVDIYIGGIEHAIMHLLYFRFFHKLMRDAGMVNSDEPAKQLLCQGMVLADAFYYVGENGERNWVSPVDAIVERDEKGRIVKAKDAAGHELVYTGMSKMSKSKNNGIDPQVMVERYGADTVRLFMMFASPADMTLEWQESGVEGANRFLKRVWKLVYEHTAKGEVAALNVDALSEDQKALRRDVHKTIAKVTDDIGRRQTFNTAIAAIMELMNKLAKAPQEGEQDRALMQEALLAVVRMLNPFTPHACFTLWEALKGEGDIDNAPWPVADDKAMVEDSTLVVVQVNGKVRGKITVPVNATEEQVRERAGQEHLVAKYLDGVTVRKVIYVPGKLLNLVVG</sequence>
<dbReference type="EC" id="6.1.1.4" evidence="1"/>
<dbReference type="EMBL" id="CP000822">
    <property type="protein sequence ID" value="ABV13623.1"/>
    <property type="status" value="ALT_INIT"/>
    <property type="molecule type" value="Genomic_DNA"/>
</dbReference>
<dbReference type="SMR" id="A8AJG0"/>
<dbReference type="STRING" id="290338.CKO_02514"/>
<dbReference type="KEGG" id="cko:CKO_02514"/>
<dbReference type="HOGENOM" id="CLU_004427_0_0_6"/>
<dbReference type="OrthoDB" id="9810365at2"/>
<dbReference type="Proteomes" id="UP000008148">
    <property type="component" value="Chromosome"/>
</dbReference>
<dbReference type="GO" id="GO:0005829">
    <property type="term" value="C:cytosol"/>
    <property type="evidence" value="ECO:0007669"/>
    <property type="project" value="TreeGrafter"/>
</dbReference>
<dbReference type="GO" id="GO:0002161">
    <property type="term" value="F:aminoacyl-tRNA deacylase activity"/>
    <property type="evidence" value="ECO:0007669"/>
    <property type="project" value="InterPro"/>
</dbReference>
<dbReference type="GO" id="GO:0005524">
    <property type="term" value="F:ATP binding"/>
    <property type="evidence" value="ECO:0007669"/>
    <property type="project" value="UniProtKB-UniRule"/>
</dbReference>
<dbReference type="GO" id="GO:0004823">
    <property type="term" value="F:leucine-tRNA ligase activity"/>
    <property type="evidence" value="ECO:0007669"/>
    <property type="project" value="UniProtKB-UniRule"/>
</dbReference>
<dbReference type="GO" id="GO:0006429">
    <property type="term" value="P:leucyl-tRNA aminoacylation"/>
    <property type="evidence" value="ECO:0007669"/>
    <property type="project" value="UniProtKB-UniRule"/>
</dbReference>
<dbReference type="CDD" id="cd07958">
    <property type="entry name" value="Anticodon_Ia_Leu_BEm"/>
    <property type="match status" value="1"/>
</dbReference>
<dbReference type="CDD" id="cd00812">
    <property type="entry name" value="LeuRS_core"/>
    <property type="match status" value="1"/>
</dbReference>
<dbReference type="FunFam" id="1.10.730.10:FF:000002">
    <property type="entry name" value="Leucine--tRNA ligase"/>
    <property type="match status" value="2"/>
</dbReference>
<dbReference type="FunFam" id="2.20.28.290:FF:000001">
    <property type="entry name" value="Leucine--tRNA ligase"/>
    <property type="match status" value="1"/>
</dbReference>
<dbReference type="FunFam" id="3.10.20.590:FF:000001">
    <property type="entry name" value="Leucine--tRNA ligase"/>
    <property type="match status" value="1"/>
</dbReference>
<dbReference type="FunFam" id="3.40.50.620:FF:000003">
    <property type="entry name" value="Leucine--tRNA ligase"/>
    <property type="match status" value="1"/>
</dbReference>
<dbReference type="FunFam" id="3.40.50.620:FF:000124">
    <property type="entry name" value="Leucine--tRNA ligase"/>
    <property type="match status" value="1"/>
</dbReference>
<dbReference type="FunFam" id="3.90.740.10:FF:000012">
    <property type="entry name" value="Leucine--tRNA ligase"/>
    <property type="match status" value="1"/>
</dbReference>
<dbReference type="Gene3D" id="2.20.28.290">
    <property type="match status" value="1"/>
</dbReference>
<dbReference type="Gene3D" id="3.10.20.590">
    <property type="match status" value="1"/>
</dbReference>
<dbReference type="Gene3D" id="3.40.50.620">
    <property type="entry name" value="HUPs"/>
    <property type="match status" value="2"/>
</dbReference>
<dbReference type="Gene3D" id="1.10.730.10">
    <property type="entry name" value="Isoleucyl-tRNA Synthetase, Domain 1"/>
    <property type="match status" value="1"/>
</dbReference>
<dbReference type="Gene3D" id="3.90.740.10">
    <property type="entry name" value="Valyl/Leucyl/Isoleucyl-tRNA synthetase, editing domain"/>
    <property type="match status" value="1"/>
</dbReference>
<dbReference type="HAMAP" id="MF_00049_B">
    <property type="entry name" value="Leu_tRNA_synth_B"/>
    <property type="match status" value="1"/>
</dbReference>
<dbReference type="InterPro" id="IPR001412">
    <property type="entry name" value="aa-tRNA-synth_I_CS"/>
</dbReference>
<dbReference type="InterPro" id="IPR002300">
    <property type="entry name" value="aa-tRNA-synth_Ia"/>
</dbReference>
<dbReference type="InterPro" id="IPR002302">
    <property type="entry name" value="Leu-tRNA-ligase"/>
</dbReference>
<dbReference type="InterPro" id="IPR025709">
    <property type="entry name" value="Leu_tRNA-synth_edit"/>
</dbReference>
<dbReference type="InterPro" id="IPR013155">
    <property type="entry name" value="M/V/L/I-tRNA-synth_anticd-bd"/>
</dbReference>
<dbReference type="InterPro" id="IPR015413">
    <property type="entry name" value="Methionyl/Leucyl_tRNA_Synth"/>
</dbReference>
<dbReference type="InterPro" id="IPR014729">
    <property type="entry name" value="Rossmann-like_a/b/a_fold"/>
</dbReference>
<dbReference type="InterPro" id="IPR009080">
    <property type="entry name" value="tRNAsynth_Ia_anticodon-bd"/>
</dbReference>
<dbReference type="InterPro" id="IPR009008">
    <property type="entry name" value="Val/Leu/Ile-tRNA-synth_edit"/>
</dbReference>
<dbReference type="NCBIfam" id="TIGR00396">
    <property type="entry name" value="leuS_bact"/>
    <property type="match status" value="1"/>
</dbReference>
<dbReference type="PANTHER" id="PTHR43740:SF2">
    <property type="entry name" value="LEUCINE--TRNA LIGASE, MITOCHONDRIAL"/>
    <property type="match status" value="1"/>
</dbReference>
<dbReference type="PANTHER" id="PTHR43740">
    <property type="entry name" value="LEUCYL-TRNA SYNTHETASE"/>
    <property type="match status" value="1"/>
</dbReference>
<dbReference type="Pfam" id="PF08264">
    <property type="entry name" value="Anticodon_1"/>
    <property type="match status" value="1"/>
</dbReference>
<dbReference type="Pfam" id="PF00133">
    <property type="entry name" value="tRNA-synt_1"/>
    <property type="match status" value="2"/>
</dbReference>
<dbReference type="Pfam" id="PF13603">
    <property type="entry name" value="tRNA-synt_1_2"/>
    <property type="match status" value="1"/>
</dbReference>
<dbReference type="Pfam" id="PF09334">
    <property type="entry name" value="tRNA-synt_1g"/>
    <property type="match status" value="1"/>
</dbReference>
<dbReference type="PRINTS" id="PR00985">
    <property type="entry name" value="TRNASYNTHLEU"/>
</dbReference>
<dbReference type="SUPFAM" id="SSF47323">
    <property type="entry name" value="Anticodon-binding domain of a subclass of class I aminoacyl-tRNA synthetases"/>
    <property type="match status" value="1"/>
</dbReference>
<dbReference type="SUPFAM" id="SSF52374">
    <property type="entry name" value="Nucleotidylyl transferase"/>
    <property type="match status" value="1"/>
</dbReference>
<dbReference type="SUPFAM" id="SSF50677">
    <property type="entry name" value="ValRS/IleRS/LeuRS editing domain"/>
    <property type="match status" value="1"/>
</dbReference>
<dbReference type="PROSITE" id="PS00178">
    <property type="entry name" value="AA_TRNA_LIGASE_I"/>
    <property type="match status" value="1"/>
</dbReference>
<protein>
    <recommendedName>
        <fullName evidence="1">Leucine--tRNA ligase</fullName>
        <ecNumber evidence="1">6.1.1.4</ecNumber>
    </recommendedName>
    <alternativeName>
        <fullName evidence="1">Leucyl-tRNA synthetase</fullName>
        <shortName evidence="1">LeuRS</shortName>
    </alternativeName>
</protein>
<comment type="catalytic activity">
    <reaction evidence="1">
        <text>tRNA(Leu) + L-leucine + ATP = L-leucyl-tRNA(Leu) + AMP + diphosphate</text>
        <dbReference type="Rhea" id="RHEA:11688"/>
        <dbReference type="Rhea" id="RHEA-COMP:9613"/>
        <dbReference type="Rhea" id="RHEA-COMP:9622"/>
        <dbReference type="ChEBI" id="CHEBI:30616"/>
        <dbReference type="ChEBI" id="CHEBI:33019"/>
        <dbReference type="ChEBI" id="CHEBI:57427"/>
        <dbReference type="ChEBI" id="CHEBI:78442"/>
        <dbReference type="ChEBI" id="CHEBI:78494"/>
        <dbReference type="ChEBI" id="CHEBI:456215"/>
        <dbReference type="EC" id="6.1.1.4"/>
    </reaction>
</comment>
<comment type="subcellular location">
    <subcellularLocation>
        <location evidence="1">Cytoplasm</location>
    </subcellularLocation>
</comment>
<comment type="similarity">
    <text evidence="1">Belongs to the class-I aminoacyl-tRNA synthetase family.</text>
</comment>
<comment type="sequence caution" evidence="2">
    <conflict type="erroneous initiation">
        <sequence resource="EMBL-CDS" id="ABV13623"/>
    </conflict>
</comment>
<keyword id="KW-0030">Aminoacyl-tRNA synthetase</keyword>
<keyword id="KW-0067">ATP-binding</keyword>
<keyword id="KW-0963">Cytoplasm</keyword>
<keyword id="KW-0436">Ligase</keyword>
<keyword id="KW-0547">Nucleotide-binding</keyword>
<keyword id="KW-0648">Protein biosynthesis</keyword>
<keyword id="KW-1185">Reference proteome</keyword>
<reference key="1">
    <citation type="submission" date="2007-08" db="EMBL/GenBank/DDBJ databases">
        <authorList>
            <consortium name="The Citrobacter koseri Genome Sequencing Project"/>
            <person name="McClelland M."/>
            <person name="Sanderson E.K."/>
            <person name="Porwollik S."/>
            <person name="Spieth J."/>
            <person name="Clifton W.S."/>
            <person name="Latreille P."/>
            <person name="Courtney L."/>
            <person name="Wang C."/>
            <person name="Pepin K."/>
            <person name="Bhonagiri V."/>
            <person name="Nash W."/>
            <person name="Johnson M."/>
            <person name="Thiruvilangam P."/>
            <person name="Wilson R."/>
        </authorList>
    </citation>
    <scope>NUCLEOTIDE SEQUENCE [LARGE SCALE GENOMIC DNA]</scope>
    <source>
        <strain>ATCC BAA-895 / CDC 4225-83 / SGSC4696</strain>
    </source>
</reference>
<feature type="chain" id="PRO_0000334742" description="Leucine--tRNA ligase">
    <location>
        <begin position="1"/>
        <end position="860"/>
    </location>
</feature>
<feature type="short sequence motif" description="'HIGH' region">
    <location>
        <begin position="42"/>
        <end position="52"/>
    </location>
</feature>
<feature type="short sequence motif" description="'KMSKS' region">
    <location>
        <begin position="619"/>
        <end position="623"/>
    </location>
</feature>
<feature type="binding site" evidence="1">
    <location>
        <position position="622"/>
    </location>
    <ligand>
        <name>ATP</name>
        <dbReference type="ChEBI" id="CHEBI:30616"/>
    </ligand>
</feature>
<evidence type="ECO:0000255" key="1">
    <source>
        <dbReference type="HAMAP-Rule" id="MF_00049"/>
    </source>
</evidence>
<evidence type="ECO:0000305" key="2"/>
<gene>
    <name evidence="1" type="primary">leuS</name>
    <name type="ordered locus">CKO_02514</name>
</gene>
<name>SYL_CITK8</name>
<proteinExistence type="inferred from homology"/>